<comment type="function">
    <text evidence="1">Involved in iron-sulfur (Fe-S) cluster assembly. May act as a regulator of Fe-S biogenesis.</text>
</comment>
<comment type="similarity">
    <text evidence="1">Belongs to the frataxin family.</text>
</comment>
<feature type="chain" id="PRO_0000193965" description="Iron-sulfur cluster assembly protein CyaY">
    <location>
        <begin position="1"/>
        <end position="104"/>
    </location>
</feature>
<name>CYAY_ALIF1</name>
<accession>Q5E1W5</accession>
<proteinExistence type="inferred from homology"/>
<evidence type="ECO:0000255" key="1">
    <source>
        <dbReference type="HAMAP-Rule" id="MF_00142"/>
    </source>
</evidence>
<gene>
    <name evidence="1" type="primary">cyaY</name>
    <name type="ordered locus">VF_2486</name>
</gene>
<dbReference type="EMBL" id="CP000020">
    <property type="protein sequence ID" value="AAW86981.1"/>
    <property type="molecule type" value="Genomic_DNA"/>
</dbReference>
<dbReference type="RefSeq" id="WP_011262843.1">
    <property type="nucleotide sequence ID" value="NC_006840.2"/>
</dbReference>
<dbReference type="RefSeq" id="YP_205869.1">
    <property type="nucleotide sequence ID" value="NC_006840.2"/>
</dbReference>
<dbReference type="SMR" id="Q5E1W5"/>
<dbReference type="STRING" id="312309.VF_2486"/>
<dbReference type="EnsemblBacteria" id="AAW86981">
    <property type="protein sequence ID" value="AAW86981"/>
    <property type="gene ID" value="VF_2486"/>
</dbReference>
<dbReference type="GeneID" id="54165218"/>
<dbReference type="KEGG" id="vfi:VF_2486"/>
<dbReference type="PATRIC" id="fig|312309.11.peg.2515"/>
<dbReference type="eggNOG" id="COG1965">
    <property type="taxonomic scope" value="Bacteria"/>
</dbReference>
<dbReference type="HOGENOM" id="CLU_080880_3_0_6"/>
<dbReference type="OrthoDB" id="285675at2"/>
<dbReference type="Proteomes" id="UP000000537">
    <property type="component" value="Chromosome I"/>
</dbReference>
<dbReference type="GO" id="GO:0005829">
    <property type="term" value="C:cytosol"/>
    <property type="evidence" value="ECO:0007669"/>
    <property type="project" value="TreeGrafter"/>
</dbReference>
<dbReference type="GO" id="GO:0008199">
    <property type="term" value="F:ferric iron binding"/>
    <property type="evidence" value="ECO:0007669"/>
    <property type="project" value="InterPro"/>
</dbReference>
<dbReference type="GO" id="GO:0008198">
    <property type="term" value="F:ferrous iron binding"/>
    <property type="evidence" value="ECO:0007669"/>
    <property type="project" value="TreeGrafter"/>
</dbReference>
<dbReference type="GO" id="GO:0016226">
    <property type="term" value="P:iron-sulfur cluster assembly"/>
    <property type="evidence" value="ECO:0007669"/>
    <property type="project" value="UniProtKB-UniRule"/>
</dbReference>
<dbReference type="CDD" id="cd00503">
    <property type="entry name" value="Frataxin"/>
    <property type="match status" value="1"/>
</dbReference>
<dbReference type="Gene3D" id="3.30.920.10">
    <property type="entry name" value="Frataxin/CyaY"/>
    <property type="match status" value="1"/>
</dbReference>
<dbReference type="HAMAP" id="MF_00142">
    <property type="entry name" value="CyaY"/>
    <property type="match status" value="1"/>
</dbReference>
<dbReference type="InterPro" id="IPR047584">
    <property type="entry name" value="CyaY"/>
</dbReference>
<dbReference type="InterPro" id="IPR002908">
    <property type="entry name" value="Frataxin/CyaY"/>
</dbReference>
<dbReference type="InterPro" id="IPR036524">
    <property type="entry name" value="Frataxin/CyaY_sf"/>
</dbReference>
<dbReference type="InterPro" id="IPR020895">
    <property type="entry name" value="Frataxin_CS"/>
</dbReference>
<dbReference type="NCBIfam" id="TIGR03421">
    <property type="entry name" value="FeS_CyaY"/>
    <property type="match status" value="1"/>
</dbReference>
<dbReference type="PANTHER" id="PTHR16821">
    <property type="entry name" value="FRATAXIN"/>
    <property type="match status" value="1"/>
</dbReference>
<dbReference type="PANTHER" id="PTHR16821:SF2">
    <property type="entry name" value="FRATAXIN, MITOCHONDRIAL"/>
    <property type="match status" value="1"/>
</dbReference>
<dbReference type="Pfam" id="PF01491">
    <property type="entry name" value="Frataxin_Cyay"/>
    <property type="match status" value="1"/>
</dbReference>
<dbReference type="SMART" id="SM01219">
    <property type="entry name" value="Frataxin_Cyay"/>
    <property type="match status" value="1"/>
</dbReference>
<dbReference type="SUPFAM" id="SSF55387">
    <property type="entry name" value="Frataxin/Nqo15-like"/>
    <property type="match status" value="1"/>
</dbReference>
<dbReference type="PROSITE" id="PS01344">
    <property type="entry name" value="FRATAXIN_1"/>
    <property type="match status" value="1"/>
</dbReference>
<dbReference type="PROSITE" id="PS50810">
    <property type="entry name" value="FRATAXIN_2"/>
    <property type="match status" value="1"/>
</dbReference>
<sequence>MNNTEFHELVDEKLQLIEDMIDDSGADIEPVITGNVLTLEFENRSQIVINKQEPMHEIWLASKSGGFHFSYVDEKWTCSKTGMEFIEMVKEECQKHADEEIEWA</sequence>
<protein>
    <recommendedName>
        <fullName evidence="1">Iron-sulfur cluster assembly protein CyaY</fullName>
    </recommendedName>
</protein>
<reference key="1">
    <citation type="journal article" date="2005" name="Proc. Natl. Acad. Sci. U.S.A.">
        <title>Complete genome sequence of Vibrio fischeri: a symbiotic bacterium with pathogenic congeners.</title>
        <authorList>
            <person name="Ruby E.G."/>
            <person name="Urbanowski M."/>
            <person name="Campbell J."/>
            <person name="Dunn A."/>
            <person name="Faini M."/>
            <person name="Gunsalus R."/>
            <person name="Lostroh P."/>
            <person name="Lupp C."/>
            <person name="McCann J."/>
            <person name="Millikan D."/>
            <person name="Schaefer A."/>
            <person name="Stabb E."/>
            <person name="Stevens A."/>
            <person name="Visick K."/>
            <person name="Whistler C."/>
            <person name="Greenberg E.P."/>
        </authorList>
    </citation>
    <scope>NUCLEOTIDE SEQUENCE [LARGE SCALE GENOMIC DNA]</scope>
    <source>
        <strain>ATCC 700601 / ES114</strain>
    </source>
</reference>
<organism>
    <name type="scientific">Aliivibrio fischeri (strain ATCC 700601 / ES114)</name>
    <name type="common">Vibrio fischeri</name>
    <dbReference type="NCBI Taxonomy" id="312309"/>
    <lineage>
        <taxon>Bacteria</taxon>
        <taxon>Pseudomonadati</taxon>
        <taxon>Pseudomonadota</taxon>
        <taxon>Gammaproteobacteria</taxon>
        <taxon>Vibrionales</taxon>
        <taxon>Vibrionaceae</taxon>
        <taxon>Aliivibrio</taxon>
    </lineage>
</organism>
<keyword id="KW-0408">Iron</keyword>
<keyword id="KW-0479">Metal-binding</keyword>
<keyword id="KW-1185">Reference proteome</keyword>